<feature type="chain" id="PRO_5000144425" description="Uncharacterized protein A118R">
    <location>
        <begin position="1"/>
        <end position="118"/>
    </location>
</feature>
<feature type="transmembrane region" description="Helical" evidence="1">
    <location>
        <begin position="5"/>
        <end position="25"/>
    </location>
</feature>
<feature type="transmembrane region" description="Helical" evidence="1">
    <location>
        <begin position="40"/>
        <end position="57"/>
    </location>
</feature>
<proteinExistence type="evidence at transcript level"/>
<reference key="1">
    <citation type="journal article" date="1995" name="Virology">
        <title>Analysis of the complete nucleotide sequence of African swine fever virus.</title>
        <authorList>
            <person name="Yanez R.J."/>
            <person name="Rodriguez J.M."/>
            <person name="Nogal M.L."/>
            <person name="Yuste L."/>
            <person name="Enriquez C."/>
            <person name="Rodriguez J.F."/>
            <person name="Vinuela E."/>
        </authorList>
    </citation>
    <scope>NUCLEOTIDE SEQUENCE [LARGE SCALE GENOMIC DNA]</scope>
</reference>
<reference key="2">
    <citation type="journal article" date="2020" name="J. Virol.">
        <title>The African Swine Fever Virus Transcriptome.</title>
        <authorList>
            <person name="Cackett G."/>
            <person name="Matelska D."/>
            <person name="Sykora M."/>
            <person name="Portugal R."/>
            <person name="Malecki M."/>
            <person name="Baehler J."/>
            <person name="Dixon L."/>
            <person name="Werner F."/>
        </authorList>
    </citation>
    <scope>INDUCTION</scope>
</reference>
<keyword id="KW-0426">Late protein</keyword>
<keyword id="KW-0472">Membrane</keyword>
<keyword id="KW-1185">Reference proteome</keyword>
<keyword id="KW-0812">Transmembrane</keyword>
<keyword id="KW-1133">Transmembrane helix</keyword>
<comment type="subcellular location">
    <subcellularLocation>
        <location evidence="3">Membrane</location>
        <topology evidence="3">Multi-pass membrane protein</topology>
    </subcellularLocation>
</comment>
<comment type="induction">
    <text evidence="2">Expressed in the late phase of the viral replicative cycle.</text>
</comment>
<gene>
    <name type="ordered locus">Ba71V-035</name>
    <name type="ORF">A118R</name>
</gene>
<dbReference type="EMBL" id="U18466">
    <property type="protein sequence ID" value="AAA65266.1"/>
    <property type="molecule type" value="Genomic_DNA"/>
</dbReference>
<dbReference type="RefSeq" id="NP_042730.1">
    <property type="nucleotide sequence ID" value="NC_001659.2"/>
</dbReference>
<dbReference type="GeneID" id="22220418"/>
<dbReference type="KEGG" id="vg:22220418"/>
<dbReference type="Proteomes" id="UP000000624">
    <property type="component" value="Segment"/>
</dbReference>
<dbReference type="GO" id="GO:0016020">
    <property type="term" value="C:membrane"/>
    <property type="evidence" value="ECO:0007669"/>
    <property type="project" value="UniProtKB-SubCell"/>
</dbReference>
<protein>
    <recommendedName>
        <fullName>Uncharacterized protein A118R</fullName>
    </recommendedName>
</protein>
<organism>
    <name type="scientific">African swine fever virus (strain Badajoz 1971 Vero-adapted)</name>
    <name type="common">Ba71V</name>
    <name type="synonym">ASFV</name>
    <dbReference type="NCBI Taxonomy" id="10498"/>
    <lineage>
        <taxon>Viruses</taxon>
        <taxon>Varidnaviria</taxon>
        <taxon>Bamfordvirae</taxon>
        <taxon>Nucleocytoviricota</taxon>
        <taxon>Pokkesviricetes</taxon>
        <taxon>Asfuvirales</taxon>
        <taxon>Asfarviridae</taxon>
        <taxon>Asfivirus</taxon>
        <taxon>African swine fever virus</taxon>
    </lineage>
</organism>
<name>VF118_ASFB7</name>
<evidence type="ECO:0000255" key="1"/>
<evidence type="ECO:0000269" key="2">
    <source>
    </source>
</evidence>
<evidence type="ECO:0000305" key="3"/>
<sequence length="118" mass="13845">MHSNAFFNLIACVLFPTPLIPSMVISIPRMINKWVKRVQFLTFLTNLFLYNIVQHYINRIRCYSFIKYLLLYNLYRPIFGRSLQMAITKIKIISDATAAVLLKSCAAMYDVLIDKKFK</sequence>
<organismHost>
    <name type="scientific">Ornithodoros</name>
    <name type="common">relapsing fever ticks</name>
    <dbReference type="NCBI Taxonomy" id="6937"/>
</organismHost>
<organismHost>
    <name type="scientific">Sus scrofa</name>
    <name type="common">Pig</name>
    <dbReference type="NCBI Taxonomy" id="9823"/>
</organismHost>
<accession>Q65139</accession>